<name>RS18_VIBCH</name>
<keyword id="KW-1185">Reference proteome</keyword>
<keyword id="KW-0687">Ribonucleoprotein</keyword>
<keyword id="KW-0689">Ribosomal protein</keyword>
<keyword id="KW-0694">RNA-binding</keyword>
<keyword id="KW-0699">rRNA-binding</keyword>
<reference key="1">
    <citation type="journal article" date="2000" name="Nature">
        <title>DNA sequence of both chromosomes of the cholera pathogen Vibrio cholerae.</title>
        <authorList>
            <person name="Heidelberg J.F."/>
            <person name="Eisen J.A."/>
            <person name="Nelson W.C."/>
            <person name="Clayton R.A."/>
            <person name="Gwinn M.L."/>
            <person name="Dodson R.J."/>
            <person name="Haft D.H."/>
            <person name="Hickey E.K."/>
            <person name="Peterson J.D."/>
            <person name="Umayam L.A."/>
            <person name="Gill S.R."/>
            <person name="Nelson K.E."/>
            <person name="Read T.D."/>
            <person name="Tettelin H."/>
            <person name="Richardson D.L."/>
            <person name="Ermolaeva M.D."/>
            <person name="Vamathevan J.J."/>
            <person name="Bass S."/>
            <person name="Qin H."/>
            <person name="Dragoi I."/>
            <person name="Sellers P."/>
            <person name="McDonald L.A."/>
            <person name="Utterback T.R."/>
            <person name="Fleischmann R.D."/>
            <person name="Nierman W.C."/>
            <person name="White O."/>
            <person name="Salzberg S.L."/>
            <person name="Smith H.O."/>
            <person name="Colwell R.R."/>
            <person name="Mekalanos J.J."/>
            <person name="Venter J.C."/>
            <person name="Fraser C.M."/>
        </authorList>
    </citation>
    <scope>NUCLEOTIDE SEQUENCE [LARGE SCALE GENOMIC DNA]</scope>
    <source>
        <strain>ATCC 39315 / El Tor Inaba N16961</strain>
    </source>
</reference>
<dbReference type="EMBL" id="AE003852">
    <property type="protein sequence ID" value="AAF93541.1"/>
    <property type="molecule type" value="Genomic_DNA"/>
</dbReference>
<dbReference type="PIR" id="B82333">
    <property type="entry name" value="B82333"/>
</dbReference>
<dbReference type="RefSeq" id="NP_230022.1">
    <property type="nucleotide sequence ID" value="NC_002505.1"/>
</dbReference>
<dbReference type="RefSeq" id="WP_000090471.1">
    <property type="nucleotide sequence ID" value="NZ_LT906614.1"/>
</dbReference>
<dbReference type="SMR" id="Q9KUZ0"/>
<dbReference type="STRING" id="243277.VC_0368"/>
<dbReference type="DNASU" id="2615047"/>
<dbReference type="EnsemblBacteria" id="AAF93541">
    <property type="protein sequence ID" value="AAF93541"/>
    <property type="gene ID" value="VC_0368"/>
</dbReference>
<dbReference type="GeneID" id="97542797"/>
<dbReference type="KEGG" id="vch:VC_0368"/>
<dbReference type="PATRIC" id="fig|243277.26.peg.344"/>
<dbReference type="eggNOG" id="COG0238">
    <property type="taxonomic scope" value="Bacteria"/>
</dbReference>
<dbReference type="HOGENOM" id="CLU_148710_2_3_6"/>
<dbReference type="PRO" id="PR:Q9KUZ0"/>
<dbReference type="Proteomes" id="UP000000584">
    <property type="component" value="Chromosome 1"/>
</dbReference>
<dbReference type="GO" id="GO:0022627">
    <property type="term" value="C:cytosolic small ribosomal subunit"/>
    <property type="evidence" value="ECO:0000318"/>
    <property type="project" value="GO_Central"/>
</dbReference>
<dbReference type="GO" id="GO:0070181">
    <property type="term" value="F:small ribosomal subunit rRNA binding"/>
    <property type="evidence" value="ECO:0000318"/>
    <property type="project" value="GO_Central"/>
</dbReference>
<dbReference type="GO" id="GO:0003735">
    <property type="term" value="F:structural constituent of ribosome"/>
    <property type="evidence" value="ECO:0000318"/>
    <property type="project" value="GO_Central"/>
</dbReference>
<dbReference type="GO" id="GO:0006412">
    <property type="term" value="P:translation"/>
    <property type="evidence" value="ECO:0000318"/>
    <property type="project" value="GO_Central"/>
</dbReference>
<dbReference type="FunFam" id="4.10.640.10:FF:000001">
    <property type="entry name" value="30S ribosomal protein S18"/>
    <property type="match status" value="1"/>
</dbReference>
<dbReference type="Gene3D" id="4.10.640.10">
    <property type="entry name" value="Ribosomal protein S18"/>
    <property type="match status" value="1"/>
</dbReference>
<dbReference type="HAMAP" id="MF_00270">
    <property type="entry name" value="Ribosomal_bS18"/>
    <property type="match status" value="1"/>
</dbReference>
<dbReference type="InterPro" id="IPR001648">
    <property type="entry name" value="Ribosomal_bS18"/>
</dbReference>
<dbReference type="InterPro" id="IPR018275">
    <property type="entry name" value="Ribosomal_bS18_CS"/>
</dbReference>
<dbReference type="InterPro" id="IPR036870">
    <property type="entry name" value="Ribosomal_bS18_sf"/>
</dbReference>
<dbReference type="NCBIfam" id="TIGR00165">
    <property type="entry name" value="S18"/>
    <property type="match status" value="1"/>
</dbReference>
<dbReference type="PANTHER" id="PTHR13479">
    <property type="entry name" value="30S RIBOSOMAL PROTEIN S18"/>
    <property type="match status" value="1"/>
</dbReference>
<dbReference type="PANTHER" id="PTHR13479:SF40">
    <property type="entry name" value="SMALL RIBOSOMAL SUBUNIT PROTEIN BS18M"/>
    <property type="match status" value="1"/>
</dbReference>
<dbReference type="Pfam" id="PF01084">
    <property type="entry name" value="Ribosomal_S18"/>
    <property type="match status" value="1"/>
</dbReference>
<dbReference type="PRINTS" id="PR00974">
    <property type="entry name" value="RIBOSOMALS18"/>
</dbReference>
<dbReference type="SUPFAM" id="SSF46911">
    <property type="entry name" value="Ribosomal protein S18"/>
    <property type="match status" value="1"/>
</dbReference>
<dbReference type="PROSITE" id="PS00057">
    <property type="entry name" value="RIBOSOMAL_S18"/>
    <property type="match status" value="1"/>
</dbReference>
<organism>
    <name type="scientific">Vibrio cholerae serotype O1 (strain ATCC 39315 / El Tor Inaba N16961)</name>
    <dbReference type="NCBI Taxonomy" id="243277"/>
    <lineage>
        <taxon>Bacteria</taxon>
        <taxon>Pseudomonadati</taxon>
        <taxon>Pseudomonadota</taxon>
        <taxon>Gammaproteobacteria</taxon>
        <taxon>Vibrionales</taxon>
        <taxon>Vibrionaceae</taxon>
        <taxon>Vibrio</taxon>
    </lineage>
</organism>
<gene>
    <name evidence="1" type="primary">rpsR</name>
    <name type="ordered locus">VC_0368</name>
</gene>
<protein>
    <recommendedName>
        <fullName evidence="1">Small ribosomal subunit protein bS18</fullName>
    </recommendedName>
    <alternativeName>
        <fullName evidence="2">30S ribosomal protein S18</fullName>
    </alternativeName>
</protein>
<evidence type="ECO:0000255" key="1">
    <source>
        <dbReference type="HAMAP-Rule" id="MF_00270"/>
    </source>
</evidence>
<evidence type="ECO:0000305" key="2"/>
<proteinExistence type="inferred from homology"/>
<feature type="chain" id="PRO_0000111258" description="Small ribosomal subunit protein bS18">
    <location>
        <begin position="1"/>
        <end position="75"/>
    </location>
</feature>
<comment type="function">
    <text evidence="1">Binds as a heterodimer with protein bS6 to the central domain of the 16S rRNA, where it helps stabilize the platform of the 30S subunit.</text>
</comment>
<comment type="subunit">
    <text evidence="1">Part of the 30S ribosomal subunit. Forms a tight heterodimer with protein bS6.</text>
</comment>
<comment type="similarity">
    <text evidence="1">Belongs to the bacterial ribosomal protein bS18 family.</text>
</comment>
<accession>Q9KUZ0</accession>
<sequence>MARFFRRRKFCRFTAEGVQEIDYKDVATLKNYITEAGKIVPSRITGTSAKYQRQLARAIKRARYLALLPYTDKHQ</sequence>